<sequence>MKASMFLALAGLVLLFVVGYASESEEKEFPIELLSKIFAVDVFKGEERGCKGFGDSCTPGKNECCPNPACSNKHKWCKVYLGK</sequence>
<name>H3E01_CYRHA</name>
<protein>
    <recommendedName>
        <fullName>Mu-theraphotoxin-Hhn2m</fullName>
        <shortName>Mu-TRTX-Hhn2m</shortName>
    </recommendedName>
    <alternativeName>
        <fullName>Hainantoxin-III-5</fullName>
        <shortName>HNTX-III-5</shortName>
    </alternativeName>
</protein>
<keyword id="KW-0027">Amidation</keyword>
<keyword id="KW-1015">Disulfide bond</keyword>
<keyword id="KW-0872">Ion channel impairing toxin</keyword>
<keyword id="KW-0960">Knottin</keyword>
<keyword id="KW-0528">Neurotoxin</keyword>
<keyword id="KW-0638">Presynaptic neurotoxin</keyword>
<keyword id="KW-0964">Secreted</keyword>
<keyword id="KW-0732">Signal</keyword>
<keyword id="KW-0800">Toxin</keyword>
<keyword id="KW-0738">Voltage-gated sodium channel impairing toxin</keyword>
<accession>D2Y1Y8</accession>
<reference key="1">
    <citation type="journal article" date="2010" name="J. Proteome Res.">
        <title>Molecular diversification of peptide toxins from the tarantula Haplopelma hainanum (Ornithoctonus hainana) venom based on transcriptomic, peptidomic, and genomic analyses.</title>
        <authorList>
            <person name="Tang X."/>
            <person name="Zhang Y."/>
            <person name="Hu W."/>
            <person name="Xu D."/>
            <person name="Tao H."/>
            <person name="Yang X."/>
            <person name="Li Y."/>
            <person name="Jiang L."/>
            <person name="Liang S."/>
        </authorList>
    </citation>
    <scope>NUCLEOTIDE SEQUENCE [LARGE SCALE MRNA]</scope>
    <source>
        <tissue>Venom gland</tissue>
    </source>
</reference>
<feature type="signal peptide" evidence="2">
    <location>
        <begin position="1"/>
        <end position="21"/>
    </location>
</feature>
<feature type="propeptide" id="PRO_0000400542" evidence="1">
    <location>
        <begin position="22"/>
        <end position="48"/>
    </location>
</feature>
<feature type="peptide" id="PRO_0000400543" description="Mu-theraphotoxin-Hhn2m">
    <location>
        <begin position="49"/>
        <end position="81"/>
    </location>
</feature>
<feature type="modified residue" description="Leucine amide" evidence="1">
    <location>
        <position position="81"/>
    </location>
</feature>
<feature type="disulfide bond" evidence="1">
    <location>
        <begin position="50"/>
        <end position="65"/>
    </location>
</feature>
<feature type="disulfide bond" evidence="1">
    <location>
        <begin position="57"/>
        <end position="70"/>
    </location>
</feature>
<feature type="disulfide bond" evidence="1">
    <location>
        <begin position="64"/>
        <end position="77"/>
    </location>
</feature>
<dbReference type="EMBL" id="GU292865">
    <property type="protein sequence ID" value="ADB56681.1"/>
    <property type="molecule type" value="mRNA"/>
</dbReference>
<dbReference type="SMR" id="D2Y1Y8"/>
<dbReference type="ArachnoServer" id="AS002031">
    <property type="toxin name" value="mu-theraphotoxin-Hhn2m"/>
</dbReference>
<dbReference type="GO" id="GO:0005576">
    <property type="term" value="C:extracellular region"/>
    <property type="evidence" value="ECO:0007669"/>
    <property type="project" value="UniProtKB-SubCell"/>
</dbReference>
<dbReference type="GO" id="GO:0044231">
    <property type="term" value="C:host cell presynaptic membrane"/>
    <property type="evidence" value="ECO:0007669"/>
    <property type="project" value="UniProtKB-KW"/>
</dbReference>
<dbReference type="GO" id="GO:0008200">
    <property type="term" value="F:ion channel inhibitor activity"/>
    <property type="evidence" value="ECO:0007669"/>
    <property type="project" value="InterPro"/>
</dbReference>
<dbReference type="GO" id="GO:0017080">
    <property type="term" value="F:sodium channel regulator activity"/>
    <property type="evidence" value="ECO:0007669"/>
    <property type="project" value="UniProtKB-KW"/>
</dbReference>
<dbReference type="GO" id="GO:0090729">
    <property type="term" value="F:toxin activity"/>
    <property type="evidence" value="ECO:0007669"/>
    <property type="project" value="UniProtKB-KW"/>
</dbReference>
<dbReference type="InterPro" id="IPR011696">
    <property type="entry name" value="Huwentoxin-1"/>
</dbReference>
<dbReference type="InterPro" id="IPR013140">
    <property type="entry name" value="Huwentoxin_CS1"/>
</dbReference>
<dbReference type="Pfam" id="PF07740">
    <property type="entry name" value="Toxin_12"/>
    <property type="match status" value="1"/>
</dbReference>
<dbReference type="SUPFAM" id="SSF57059">
    <property type="entry name" value="omega toxin-like"/>
    <property type="match status" value="1"/>
</dbReference>
<dbReference type="PROSITE" id="PS60021">
    <property type="entry name" value="HWTX_1"/>
    <property type="match status" value="1"/>
</dbReference>
<organism>
    <name type="scientific">Cyriopagopus hainanus</name>
    <name type="common">Chinese bird spider</name>
    <name type="synonym">Haplopelma hainanum</name>
    <dbReference type="NCBI Taxonomy" id="209901"/>
    <lineage>
        <taxon>Eukaryota</taxon>
        <taxon>Metazoa</taxon>
        <taxon>Ecdysozoa</taxon>
        <taxon>Arthropoda</taxon>
        <taxon>Chelicerata</taxon>
        <taxon>Arachnida</taxon>
        <taxon>Araneae</taxon>
        <taxon>Mygalomorphae</taxon>
        <taxon>Theraphosidae</taxon>
        <taxon>Haplopelma</taxon>
    </lineage>
</organism>
<proteinExistence type="evidence at transcript level"/>
<comment type="function">
    <text evidence="1">Lethal neurotoxin. Selectively blocks tetrodotoxin-sensitive voltage-gated sodium channels (Nav). Does not affect tetrodotoxin-resistant voltage-gated sodium channels or calcium channels (By similarity).</text>
</comment>
<comment type="subunit">
    <text evidence="1">Monomer.</text>
</comment>
<comment type="subcellular location">
    <subcellularLocation>
        <location evidence="1">Secreted</location>
    </subcellularLocation>
</comment>
<comment type="tissue specificity">
    <text>Expressed by the venom gland.</text>
</comment>
<comment type="domain">
    <text evidence="1">The presence of a 'disulfide through disulfide knot' structurally defines this protein as a knottin.</text>
</comment>
<comment type="similarity">
    <text evidence="3">Belongs to the neurotoxin 10 (Hwtx-1) family. 15 (Hntx-3) subfamily.</text>
</comment>
<evidence type="ECO:0000250" key="1"/>
<evidence type="ECO:0000255" key="2"/>
<evidence type="ECO:0000305" key="3"/>